<sequence length="156" mass="16599">MTVQNDNRPLLRLVRLANGADLELPSYETRGAAGMDLRAAVPADEPLNLQPGERALVPTGFIFEVPQGYEAQIRPRSGLAIKNGITCLNSPGTVDSDYRGEVKVILANLGQDDFTIERGMRIAQMVIAPVTQVTVSEVTETSETARGAGGFGSTGV</sequence>
<feature type="chain" id="PRO_0000182823" description="Deoxyuridine 5'-triphosphate nucleotidohydrolase">
    <location>
        <begin position="1"/>
        <end position="156"/>
    </location>
</feature>
<feature type="binding site" evidence="1">
    <location>
        <begin position="76"/>
        <end position="78"/>
    </location>
    <ligand>
        <name>substrate</name>
    </ligand>
</feature>
<feature type="binding site" evidence="1">
    <location>
        <position position="89"/>
    </location>
    <ligand>
        <name>substrate</name>
    </ligand>
</feature>
<feature type="binding site" evidence="1">
    <location>
        <begin position="93"/>
        <end position="95"/>
    </location>
    <ligand>
        <name>substrate</name>
    </ligand>
</feature>
<feature type="binding site" evidence="1">
    <location>
        <position position="103"/>
    </location>
    <ligand>
        <name>substrate</name>
    </ligand>
</feature>
<dbReference type="EC" id="3.6.1.23" evidence="1"/>
<dbReference type="EMBL" id="AE007869">
    <property type="protein sequence ID" value="AAK86130.1"/>
    <property type="molecule type" value="Genomic_DNA"/>
</dbReference>
<dbReference type="PIR" id="A97397">
    <property type="entry name" value="A97397"/>
</dbReference>
<dbReference type="PIR" id="AB2615">
    <property type="entry name" value="AB2615"/>
</dbReference>
<dbReference type="RefSeq" id="NP_353345.1">
    <property type="nucleotide sequence ID" value="NC_003062.2"/>
</dbReference>
<dbReference type="RefSeq" id="WP_010970813.1">
    <property type="nucleotide sequence ID" value="NC_003062.2"/>
</dbReference>
<dbReference type="SMR" id="Q8UII1"/>
<dbReference type="STRING" id="176299.Atu0314"/>
<dbReference type="EnsemblBacteria" id="AAK86130">
    <property type="protein sequence ID" value="AAK86130"/>
    <property type="gene ID" value="Atu0314"/>
</dbReference>
<dbReference type="GeneID" id="1132352"/>
<dbReference type="KEGG" id="atu:Atu0314"/>
<dbReference type="PATRIC" id="fig|176299.10.peg.306"/>
<dbReference type="eggNOG" id="COG0756">
    <property type="taxonomic scope" value="Bacteria"/>
</dbReference>
<dbReference type="HOGENOM" id="CLU_068508_1_0_5"/>
<dbReference type="OrthoDB" id="9809956at2"/>
<dbReference type="PhylomeDB" id="Q8UII1"/>
<dbReference type="BioCyc" id="AGRO:ATU0314-MONOMER"/>
<dbReference type="UniPathway" id="UPA00610">
    <property type="reaction ID" value="UER00666"/>
</dbReference>
<dbReference type="Proteomes" id="UP000000813">
    <property type="component" value="Chromosome circular"/>
</dbReference>
<dbReference type="GO" id="GO:0004170">
    <property type="term" value="F:dUTP diphosphatase activity"/>
    <property type="evidence" value="ECO:0007669"/>
    <property type="project" value="UniProtKB-UniRule"/>
</dbReference>
<dbReference type="GO" id="GO:0000287">
    <property type="term" value="F:magnesium ion binding"/>
    <property type="evidence" value="ECO:0007669"/>
    <property type="project" value="UniProtKB-UniRule"/>
</dbReference>
<dbReference type="GO" id="GO:0006226">
    <property type="term" value="P:dUMP biosynthetic process"/>
    <property type="evidence" value="ECO:0007669"/>
    <property type="project" value="UniProtKB-UniRule"/>
</dbReference>
<dbReference type="GO" id="GO:0046081">
    <property type="term" value="P:dUTP catabolic process"/>
    <property type="evidence" value="ECO:0007669"/>
    <property type="project" value="InterPro"/>
</dbReference>
<dbReference type="CDD" id="cd07557">
    <property type="entry name" value="trimeric_dUTPase"/>
    <property type="match status" value="1"/>
</dbReference>
<dbReference type="FunFam" id="2.70.40.10:FF:000002">
    <property type="entry name" value="dUTP diphosphatase"/>
    <property type="match status" value="1"/>
</dbReference>
<dbReference type="Gene3D" id="2.70.40.10">
    <property type="match status" value="1"/>
</dbReference>
<dbReference type="HAMAP" id="MF_00116">
    <property type="entry name" value="dUTPase_bact"/>
    <property type="match status" value="1"/>
</dbReference>
<dbReference type="InterPro" id="IPR008181">
    <property type="entry name" value="dUTPase"/>
</dbReference>
<dbReference type="InterPro" id="IPR029054">
    <property type="entry name" value="dUTPase-like"/>
</dbReference>
<dbReference type="InterPro" id="IPR036157">
    <property type="entry name" value="dUTPase-like_sf"/>
</dbReference>
<dbReference type="InterPro" id="IPR033704">
    <property type="entry name" value="dUTPase_trimeric"/>
</dbReference>
<dbReference type="NCBIfam" id="TIGR00576">
    <property type="entry name" value="dut"/>
    <property type="match status" value="1"/>
</dbReference>
<dbReference type="NCBIfam" id="NF001862">
    <property type="entry name" value="PRK00601.1"/>
    <property type="match status" value="1"/>
</dbReference>
<dbReference type="PANTHER" id="PTHR11241">
    <property type="entry name" value="DEOXYURIDINE 5'-TRIPHOSPHATE NUCLEOTIDOHYDROLASE"/>
    <property type="match status" value="1"/>
</dbReference>
<dbReference type="PANTHER" id="PTHR11241:SF0">
    <property type="entry name" value="DEOXYURIDINE 5'-TRIPHOSPHATE NUCLEOTIDOHYDROLASE"/>
    <property type="match status" value="1"/>
</dbReference>
<dbReference type="Pfam" id="PF00692">
    <property type="entry name" value="dUTPase"/>
    <property type="match status" value="1"/>
</dbReference>
<dbReference type="SUPFAM" id="SSF51283">
    <property type="entry name" value="dUTPase-like"/>
    <property type="match status" value="1"/>
</dbReference>
<evidence type="ECO:0000255" key="1">
    <source>
        <dbReference type="HAMAP-Rule" id="MF_00116"/>
    </source>
</evidence>
<protein>
    <recommendedName>
        <fullName evidence="1">Deoxyuridine 5'-triphosphate nucleotidohydrolase</fullName>
        <shortName evidence="1">dUTPase</shortName>
        <ecNumber evidence="1">3.6.1.23</ecNumber>
    </recommendedName>
    <alternativeName>
        <fullName evidence="1">dUTP pyrophosphatase</fullName>
    </alternativeName>
</protein>
<organism>
    <name type="scientific">Agrobacterium fabrum (strain C58 / ATCC 33970)</name>
    <name type="common">Agrobacterium tumefaciens (strain C58)</name>
    <dbReference type="NCBI Taxonomy" id="176299"/>
    <lineage>
        <taxon>Bacteria</taxon>
        <taxon>Pseudomonadati</taxon>
        <taxon>Pseudomonadota</taxon>
        <taxon>Alphaproteobacteria</taxon>
        <taxon>Hyphomicrobiales</taxon>
        <taxon>Rhizobiaceae</taxon>
        <taxon>Rhizobium/Agrobacterium group</taxon>
        <taxon>Agrobacterium</taxon>
        <taxon>Agrobacterium tumefaciens complex</taxon>
    </lineage>
</organism>
<keyword id="KW-0378">Hydrolase</keyword>
<keyword id="KW-0460">Magnesium</keyword>
<keyword id="KW-0479">Metal-binding</keyword>
<keyword id="KW-0546">Nucleotide metabolism</keyword>
<keyword id="KW-1185">Reference proteome</keyword>
<name>DUT_AGRFC</name>
<accession>Q8UII1</accession>
<gene>
    <name evidence="1" type="primary">dut</name>
    <name type="ordered locus">Atu0314</name>
    <name type="ORF">AGR_C_548</name>
</gene>
<comment type="function">
    <text evidence="1">This enzyme is involved in nucleotide metabolism: it produces dUMP, the immediate precursor of thymidine nucleotides and it decreases the intracellular concentration of dUTP so that uracil cannot be incorporated into DNA.</text>
</comment>
<comment type="catalytic activity">
    <reaction evidence="1">
        <text>dUTP + H2O = dUMP + diphosphate + H(+)</text>
        <dbReference type="Rhea" id="RHEA:10248"/>
        <dbReference type="ChEBI" id="CHEBI:15377"/>
        <dbReference type="ChEBI" id="CHEBI:15378"/>
        <dbReference type="ChEBI" id="CHEBI:33019"/>
        <dbReference type="ChEBI" id="CHEBI:61555"/>
        <dbReference type="ChEBI" id="CHEBI:246422"/>
        <dbReference type="EC" id="3.6.1.23"/>
    </reaction>
</comment>
<comment type="cofactor">
    <cofactor evidence="1">
        <name>Mg(2+)</name>
        <dbReference type="ChEBI" id="CHEBI:18420"/>
    </cofactor>
</comment>
<comment type="pathway">
    <text evidence="1">Pyrimidine metabolism; dUMP biosynthesis; dUMP from dCTP (dUTP route): step 2/2.</text>
</comment>
<comment type="similarity">
    <text evidence="1">Belongs to the dUTPase family.</text>
</comment>
<proteinExistence type="inferred from homology"/>
<reference key="1">
    <citation type="journal article" date="2001" name="Science">
        <title>The genome of the natural genetic engineer Agrobacterium tumefaciens C58.</title>
        <authorList>
            <person name="Wood D.W."/>
            <person name="Setubal J.C."/>
            <person name="Kaul R."/>
            <person name="Monks D.E."/>
            <person name="Kitajima J.P."/>
            <person name="Okura V.K."/>
            <person name="Zhou Y."/>
            <person name="Chen L."/>
            <person name="Wood G.E."/>
            <person name="Almeida N.F. Jr."/>
            <person name="Woo L."/>
            <person name="Chen Y."/>
            <person name="Paulsen I.T."/>
            <person name="Eisen J.A."/>
            <person name="Karp P.D."/>
            <person name="Bovee D. Sr."/>
            <person name="Chapman P."/>
            <person name="Clendenning J."/>
            <person name="Deatherage G."/>
            <person name="Gillet W."/>
            <person name="Grant C."/>
            <person name="Kutyavin T."/>
            <person name="Levy R."/>
            <person name="Li M.-J."/>
            <person name="McClelland E."/>
            <person name="Palmieri A."/>
            <person name="Raymond C."/>
            <person name="Rouse G."/>
            <person name="Saenphimmachak C."/>
            <person name="Wu Z."/>
            <person name="Romero P."/>
            <person name="Gordon D."/>
            <person name="Zhang S."/>
            <person name="Yoo H."/>
            <person name="Tao Y."/>
            <person name="Biddle P."/>
            <person name="Jung M."/>
            <person name="Krespan W."/>
            <person name="Perry M."/>
            <person name="Gordon-Kamm B."/>
            <person name="Liao L."/>
            <person name="Kim S."/>
            <person name="Hendrick C."/>
            <person name="Zhao Z.-Y."/>
            <person name="Dolan M."/>
            <person name="Chumley F."/>
            <person name="Tingey S.V."/>
            <person name="Tomb J.-F."/>
            <person name="Gordon M.P."/>
            <person name="Olson M.V."/>
            <person name="Nester E.W."/>
        </authorList>
    </citation>
    <scope>NUCLEOTIDE SEQUENCE [LARGE SCALE GENOMIC DNA]</scope>
    <source>
        <strain>C58 / ATCC 33970</strain>
    </source>
</reference>
<reference key="2">
    <citation type="journal article" date="2001" name="Science">
        <title>Genome sequence of the plant pathogen and biotechnology agent Agrobacterium tumefaciens C58.</title>
        <authorList>
            <person name="Goodner B."/>
            <person name="Hinkle G."/>
            <person name="Gattung S."/>
            <person name="Miller N."/>
            <person name="Blanchard M."/>
            <person name="Qurollo B."/>
            <person name="Goldman B.S."/>
            <person name="Cao Y."/>
            <person name="Askenazi M."/>
            <person name="Halling C."/>
            <person name="Mullin L."/>
            <person name="Houmiel K."/>
            <person name="Gordon J."/>
            <person name="Vaudin M."/>
            <person name="Iartchouk O."/>
            <person name="Epp A."/>
            <person name="Liu F."/>
            <person name="Wollam C."/>
            <person name="Allinger M."/>
            <person name="Doughty D."/>
            <person name="Scott C."/>
            <person name="Lappas C."/>
            <person name="Markelz B."/>
            <person name="Flanagan C."/>
            <person name="Crowell C."/>
            <person name="Gurson J."/>
            <person name="Lomo C."/>
            <person name="Sear C."/>
            <person name="Strub G."/>
            <person name="Cielo C."/>
            <person name="Slater S."/>
        </authorList>
    </citation>
    <scope>NUCLEOTIDE SEQUENCE [LARGE SCALE GENOMIC DNA]</scope>
    <source>
        <strain>C58 / ATCC 33970</strain>
    </source>
</reference>